<keyword id="KW-0028">Amino-acid biosynthesis</keyword>
<keyword id="KW-0057">Aromatic amino acid biosynthesis</keyword>
<keyword id="KW-0456">Lyase</keyword>
<keyword id="KW-1185">Reference proteome</keyword>
<keyword id="KW-0822">Tryptophan biosynthesis</keyword>
<reference key="1">
    <citation type="journal article" date="2010" name="J. Bacteriol.">
        <title>Genome sequence of the dioxin-mineralizing bacterium Sphingomonas wittichii RW1.</title>
        <authorList>
            <person name="Miller T.R."/>
            <person name="Delcher A.L."/>
            <person name="Salzberg S.L."/>
            <person name="Saunders E."/>
            <person name="Detter J.C."/>
            <person name="Halden R.U."/>
        </authorList>
    </citation>
    <scope>NUCLEOTIDE SEQUENCE [LARGE SCALE GENOMIC DNA]</scope>
    <source>
        <strain>DSM 6014 / CCUG 31198 / JCM 15750 / NBRC 105917 / EY 4224 / RW1</strain>
    </source>
</reference>
<comment type="function">
    <text evidence="1">The alpha subunit is responsible for the aldol cleavage of indoleglycerol phosphate to indole and glyceraldehyde 3-phosphate.</text>
</comment>
<comment type="catalytic activity">
    <reaction evidence="1">
        <text>(1S,2R)-1-C-(indol-3-yl)glycerol 3-phosphate + L-serine = D-glyceraldehyde 3-phosphate + L-tryptophan + H2O</text>
        <dbReference type="Rhea" id="RHEA:10532"/>
        <dbReference type="ChEBI" id="CHEBI:15377"/>
        <dbReference type="ChEBI" id="CHEBI:33384"/>
        <dbReference type="ChEBI" id="CHEBI:57912"/>
        <dbReference type="ChEBI" id="CHEBI:58866"/>
        <dbReference type="ChEBI" id="CHEBI:59776"/>
        <dbReference type="EC" id="4.2.1.20"/>
    </reaction>
</comment>
<comment type="pathway">
    <text evidence="1">Amino-acid biosynthesis; L-tryptophan biosynthesis; L-tryptophan from chorismate: step 5/5.</text>
</comment>
<comment type="subunit">
    <text evidence="1">Tetramer of two alpha and two beta chains.</text>
</comment>
<comment type="similarity">
    <text evidence="1">Belongs to the TrpA family.</text>
</comment>
<name>TRPA_RHIWR</name>
<gene>
    <name evidence="1" type="primary">trpA</name>
    <name type="ordered locus">Swit_2727</name>
</gene>
<proteinExistence type="inferred from homology"/>
<evidence type="ECO:0000255" key="1">
    <source>
        <dbReference type="HAMAP-Rule" id="MF_00131"/>
    </source>
</evidence>
<sequence length="271" mass="27343">MTRLAETFARTRAEGRAALVTFVTGGDPTPGDMGPILDALVAGGADVIELGMPFTDPMADGPAIQRANLRALGAGTTTADLLAIAAAFRQRHPSVPLVLMGYANPMVRRGPEWFAAEAAKAGVDGVICVDIPPEQDGALGPALRAAGVAPIRLATPTTDAARLPAVLEGASGFLYYVSVAGITGMQQAGQASIEAAVARFKAATDLPVAVGFGVRGPEQAEAIGRVADGVVVGSAIVDLIGEHGAAAAGPVRDFTATLSAALRRAAQEKAA</sequence>
<organism>
    <name type="scientific">Rhizorhabdus wittichii (strain DSM 6014 / CCUG 31198 / JCM 15750 / NBRC 105917 / EY 4224 / RW1)</name>
    <name type="common">Sphingomonas wittichii</name>
    <dbReference type="NCBI Taxonomy" id="392499"/>
    <lineage>
        <taxon>Bacteria</taxon>
        <taxon>Pseudomonadati</taxon>
        <taxon>Pseudomonadota</taxon>
        <taxon>Alphaproteobacteria</taxon>
        <taxon>Sphingomonadales</taxon>
        <taxon>Sphingomonadaceae</taxon>
        <taxon>Rhizorhabdus</taxon>
    </lineage>
</organism>
<feature type="chain" id="PRO_1000018287" description="Tryptophan synthase alpha chain">
    <location>
        <begin position="1"/>
        <end position="271"/>
    </location>
</feature>
<feature type="active site" description="Proton acceptor" evidence="1">
    <location>
        <position position="49"/>
    </location>
</feature>
<feature type="active site" description="Proton acceptor" evidence="1">
    <location>
        <position position="60"/>
    </location>
</feature>
<accession>A5V9W7</accession>
<dbReference type="EC" id="4.2.1.20" evidence="1"/>
<dbReference type="EMBL" id="CP000699">
    <property type="protein sequence ID" value="ABQ69083.1"/>
    <property type="molecule type" value="Genomic_DNA"/>
</dbReference>
<dbReference type="SMR" id="A5V9W7"/>
<dbReference type="STRING" id="392499.Swit_2727"/>
<dbReference type="PaxDb" id="392499-Swit_2727"/>
<dbReference type="KEGG" id="swi:Swit_2727"/>
<dbReference type="eggNOG" id="COG0159">
    <property type="taxonomic scope" value="Bacteria"/>
</dbReference>
<dbReference type="HOGENOM" id="CLU_016734_0_0_5"/>
<dbReference type="OrthoDB" id="9804578at2"/>
<dbReference type="UniPathway" id="UPA00035">
    <property type="reaction ID" value="UER00044"/>
</dbReference>
<dbReference type="Proteomes" id="UP000001989">
    <property type="component" value="Chromosome"/>
</dbReference>
<dbReference type="GO" id="GO:0005829">
    <property type="term" value="C:cytosol"/>
    <property type="evidence" value="ECO:0007669"/>
    <property type="project" value="TreeGrafter"/>
</dbReference>
<dbReference type="GO" id="GO:0004834">
    <property type="term" value="F:tryptophan synthase activity"/>
    <property type="evidence" value="ECO:0007669"/>
    <property type="project" value="UniProtKB-UniRule"/>
</dbReference>
<dbReference type="CDD" id="cd04724">
    <property type="entry name" value="Tryptophan_synthase_alpha"/>
    <property type="match status" value="1"/>
</dbReference>
<dbReference type="FunFam" id="3.20.20.70:FF:000037">
    <property type="entry name" value="Tryptophan synthase alpha chain"/>
    <property type="match status" value="1"/>
</dbReference>
<dbReference type="Gene3D" id="3.20.20.70">
    <property type="entry name" value="Aldolase class I"/>
    <property type="match status" value="1"/>
</dbReference>
<dbReference type="HAMAP" id="MF_00131">
    <property type="entry name" value="Trp_synth_alpha"/>
    <property type="match status" value="1"/>
</dbReference>
<dbReference type="InterPro" id="IPR013785">
    <property type="entry name" value="Aldolase_TIM"/>
</dbReference>
<dbReference type="InterPro" id="IPR011060">
    <property type="entry name" value="RibuloseP-bd_barrel"/>
</dbReference>
<dbReference type="InterPro" id="IPR018204">
    <property type="entry name" value="Trp_synthase_alpha_AS"/>
</dbReference>
<dbReference type="InterPro" id="IPR002028">
    <property type="entry name" value="Trp_synthase_suA"/>
</dbReference>
<dbReference type="NCBIfam" id="TIGR00262">
    <property type="entry name" value="trpA"/>
    <property type="match status" value="1"/>
</dbReference>
<dbReference type="PANTHER" id="PTHR43406:SF1">
    <property type="entry name" value="TRYPTOPHAN SYNTHASE ALPHA CHAIN, CHLOROPLASTIC"/>
    <property type="match status" value="1"/>
</dbReference>
<dbReference type="PANTHER" id="PTHR43406">
    <property type="entry name" value="TRYPTOPHAN SYNTHASE, ALPHA CHAIN"/>
    <property type="match status" value="1"/>
</dbReference>
<dbReference type="Pfam" id="PF00290">
    <property type="entry name" value="Trp_syntA"/>
    <property type="match status" value="1"/>
</dbReference>
<dbReference type="SUPFAM" id="SSF51366">
    <property type="entry name" value="Ribulose-phoshate binding barrel"/>
    <property type="match status" value="1"/>
</dbReference>
<dbReference type="PROSITE" id="PS00167">
    <property type="entry name" value="TRP_SYNTHASE_ALPHA"/>
    <property type="match status" value="1"/>
</dbReference>
<protein>
    <recommendedName>
        <fullName evidence="1">Tryptophan synthase alpha chain</fullName>
        <ecNumber evidence="1">4.2.1.20</ecNumber>
    </recommendedName>
</protein>